<reference key="1">
    <citation type="journal article" date="2009" name="PLoS Genet.">
        <title>Organised genome dynamics in the Escherichia coli species results in highly diverse adaptive paths.</title>
        <authorList>
            <person name="Touchon M."/>
            <person name="Hoede C."/>
            <person name="Tenaillon O."/>
            <person name="Barbe V."/>
            <person name="Baeriswyl S."/>
            <person name="Bidet P."/>
            <person name="Bingen E."/>
            <person name="Bonacorsi S."/>
            <person name="Bouchier C."/>
            <person name="Bouvet O."/>
            <person name="Calteau A."/>
            <person name="Chiapello H."/>
            <person name="Clermont O."/>
            <person name="Cruveiller S."/>
            <person name="Danchin A."/>
            <person name="Diard M."/>
            <person name="Dossat C."/>
            <person name="Karoui M.E."/>
            <person name="Frapy E."/>
            <person name="Garry L."/>
            <person name="Ghigo J.M."/>
            <person name="Gilles A.M."/>
            <person name="Johnson J."/>
            <person name="Le Bouguenec C."/>
            <person name="Lescat M."/>
            <person name="Mangenot S."/>
            <person name="Martinez-Jehanne V."/>
            <person name="Matic I."/>
            <person name="Nassif X."/>
            <person name="Oztas S."/>
            <person name="Petit M.A."/>
            <person name="Pichon C."/>
            <person name="Rouy Z."/>
            <person name="Ruf C.S."/>
            <person name="Schneider D."/>
            <person name="Tourret J."/>
            <person name="Vacherie B."/>
            <person name="Vallenet D."/>
            <person name="Medigue C."/>
            <person name="Rocha E.P.C."/>
            <person name="Denamur E."/>
        </authorList>
    </citation>
    <scope>NUCLEOTIDE SEQUENCE [LARGE SCALE GENOMIC DNA]</scope>
    <source>
        <strain>IAI39 / ExPEC</strain>
    </source>
</reference>
<dbReference type="EC" id="2.1.-.-" evidence="1"/>
<dbReference type="EMBL" id="CU928164">
    <property type="protein sequence ID" value="CAR18243.1"/>
    <property type="molecule type" value="Genomic_DNA"/>
</dbReference>
<dbReference type="RefSeq" id="WP_001070350.1">
    <property type="nucleotide sequence ID" value="NC_011750.1"/>
</dbReference>
<dbReference type="RefSeq" id="YP_002408079.1">
    <property type="nucleotide sequence ID" value="NC_011750.1"/>
</dbReference>
<dbReference type="STRING" id="585057.ECIAI39_2116"/>
<dbReference type="GeneID" id="93776367"/>
<dbReference type="KEGG" id="ect:ECIAI39_2116"/>
<dbReference type="PATRIC" id="fig|585057.6.peg.2200"/>
<dbReference type="HOGENOM" id="CLU_036182_2_0_6"/>
<dbReference type="UniPathway" id="UPA00637"/>
<dbReference type="Proteomes" id="UP000000749">
    <property type="component" value="Chromosome"/>
</dbReference>
<dbReference type="GO" id="GO:0005886">
    <property type="term" value="C:plasma membrane"/>
    <property type="evidence" value="ECO:0007669"/>
    <property type="project" value="UniProtKB-SubCell"/>
</dbReference>
<dbReference type="GO" id="GO:0016747">
    <property type="term" value="F:acyltransferase activity, transferring groups other than amino-acyl groups"/>
    <property type="evidence" value="ECO:0007669"/>
    <property type="project" value="InterPro"/>
</dbReference>
<dbReference type="GO" id="GO:0016741">
    <property type="term" value="F:transferase activity, transferring one-carbon groups"/>
    <property type="evidence" value="ECO:0007669"/>
    <property type="project" value="UniProtKB-UniRule"/>
</dbReference>
<dbReference type="GO" id="GO:0009250">
    <property type="term" value="P:glucan biosynthetic process"/>
    <property type="evidence" value="ECO:0007669"/>
    <property type="project" value="UniProtKB-UniRule"/>
</dbReference>
<dbReference type="HAMAP" id="MF_01066">
    <property type="entry name" value="MdoC_OpgC"/>
    <property type="match status" value="1"/>
</dbReference>
<dbReference type="InterPro" id="IPR002656">
    <property type="entry name" value="Acyl_transf_3_dom"/>
</dbReference>
<dbReference type="InterPro" id="IPR050623">
    <property type="entry name" value="Glucan_succinyl_AcylTrfase"/>
</dbReference>
<dbReference type="InterPro" id="IPR023723">
    <property type="entry name" value="Glucans_biosynth_C"/>
</dbReference>
<dbReference type="NCBIfam" id="NF003014">
    <property type="entry name" value="PRK03854.1"/>
    <property type="match status" value="1"/>
</dbReference>
<dbReference type="PANTHER" id="PTHR36927">
    <property type="entry name" value="BLR4337 PROTEIN"/>
    <property type="match status" value="1"/>
</dbReference>
<dbReference type="PANTHER" id="PTHR36927:SF3">
    <property type="entry name" value="GLUCANS BIOSYNTHESIS PROTEIN C"/>
    <property type="match status" value="1"/>
</dbReference>
<dbReference type="Pfam" id="PF01757">
    <property type="entry name" value="Acyl_transf_3"/>
    <property type="match status" value="1"/>
</dbReference>
<organism>
    <name type="scientific">Escherichia coli O7:K1 (strain IAI39 / ExPEC)</name>
    <dbReference type="NCBI Taxonomy" id="585057"/>
    <lineage>
        <taxon>Bacteria</taxon>
        <taxon>Pseudomonadati</taxon>
        <taxon>Pseudomonadota</taxon>
        <taxon>Gammaproteobacteria</taxon>
        <taxon>Enterobacterales</taxon>
        <taxon>Enterobacteriaceae</taxon>
        <taxon>Escherichia</taxon>
    </lineage>
</organism>
<sequence length="385" mass="44700">MNPVPAQREYFLDSIRAWLMLLGIPFHISLIYSSHTWHVNSAEPSLWLTLFNDFIHSFRMQVFFVISGYFSYMLFLRYPLKKWWKVRVERVGIPMLTAIPLLTLPQFIMLQYVKGKAESWPGLSLYDKYNTLAWELISHLWFLLVLVVMTTLCVWIFKRIRNNLENSDKTNKKFSMVKLSVIFLCLGIGYAVIRRTIFIVYPPILSNGMFNFIVMQTLFYLPFFILGALAFIFPHLKALFTTPSRGCTLAAALAFVAYLLNQRYGSGDAWMYETESVITMVLGLWMVNVVFSFGHRLLNFQSARVTYFVNASLFIYLVHHPLTLFFGAYITPHITSNWLGFLCGLIFVVGIAIILYEIHLRIPLLKFLFSGKPVVKRENDKAPAR</sequence>
<comment type="function">
    <text evidence="1">Necessary for the succinyl substitution of periplasmic glucans. Could catalyze the transfer of succinyl residues from the cytoplasmic side of the membrane to the nascent glucan backbones on the periplasmic side of the membrane.</text>
</comment>
<comment type="pathway">
    <text evidence="1">Glycan metabolism; osmoregulated periplasmic glucan (OPG) biosynthesis.</text>
</comment>
<comment type="subcellular location">
    <subcellularLocation>
        <location evidence="1">Cell membrane</location>
        <topology evidence="1">Multi-pass membrane protein</topology>
    </subcellularLocation>
</comment>
<comment type="similarity">
    <text evidence="1">Belongs to the acyltransferase 3 family. OpgC subfamily.</text>
</comment>
<protein>
    <recommendedName>
        <fullName evidence="1">Glucans biosynthesis protein C</fullName>
        <ecNumber evidence="1">2.1.-.-</ecNumber>
    </recommendedName>
</protein>
<proteinExistence type="inferred from homology"/>
<evidence type="ECO:0000255" key="1">
    <source>
        <dbReference type="HAMAP-Rule" id="MF_01066"/>
    </source>
</evidence>
<feature type="chain" id="PRO_1000136564" description="Glucans biosynthesis protein C">
    <location>
        <begin position="1"/>
        <end position="385"/>
    </location>
</feature>
<feature type="transmembrane region" description="Helical" evidence="1">
    <location>
        <begin position="17"/>
        <end position="37"/>
    </location>
</feature>
<feature type="transmembrane region" description="Helical" evidence="1">
    <location>
        <begin position="60"/>
        <end position="80"/>
    </location>
</feature>
<feature type="transmembrane region" description="Helical" evidence="1">
    <location>
        <begin position="91"/>
        <end position="111"/>
    </location>
</feature>
<feature type="transmembrane region" description="Helical" evidence="1">
    <location>
        <begin position="137"/>
        <end position="157"/>
    </location>
</feature>
<feature type="transmembrane region" description="Helical" evidence="1">
    <location>
        <begin position="173"/>
        <end position="193"/>
    </location>
</feature>
<feature type="transmembrane region" description="Helical" evidence="1">
    <location>
        <begin position="212"/>
        <end position="232"/>
    </location>
</feature>
<feature type="transmembrane region" description="Helical" evidence="1">
    <location>
        <begin position="239"/>
        <end position="259"/>
    </location>
</feature>
<feature type="transmembrane region" description="Helical" evidence="1">
    <location>
        <begin position="274"/>
        <end position="294"/>
    </location>
</feature>
<feature type="transmembrane region" description="Helical" evidence="1">
    <location>
        <begin position="311"/>
        <end position="331"/>
    </location>
</feature>
<feature type="transmembrane region" description="Helical" evidence="1">
    <location>
        <begin position="338"/>
        <end position="358"/>
    </location>
</feature>
<keyword id="KW-0012">Acyltransferase</keyword>
<keyword id="KW-1003">Cell membrane</keyword>
<keyword id="KW-0472">Membrane</keyword>
<keyword id="KW-0808">Transferase</keyword>
<keyword id="KW-0812">Transmembrane</keyword>
<keyword id="KW-1133">Transmembrane helix</keyword>
<name>OPGC_ECO7I</name>
<gene>
    <name evidence="1" type="primary">mdoC</name>
    <name evidence="1" type="synonym">opgC</name>
    <name type="ordered locus">ECIAI39_2116</name>
</gene>
<accession>B7NL87</accession>